<dbReference type="EC" id="3.2.1.15"/>
<dbReference type="EMBL" id="X58892">
    <property type="protein sequence ID" value="CAA41693.1"/>
    <property type="molecule type" value="Genomic_DNA"/>
</dbReference>
<dbReference type="PIR" id="S17980">
    <property type="entry name" value="S17980"/>
</dbReference>
<dbReference type="RefSeq" id="XP_001389562.1">
    <property type="nucleotide sequence ID" value="XM_001389525.1"/>
</dbReference>
<dbReference type="PDB" id="1NHC">
    <property type="method" value="X-ray"/>
    <property type="resolution" value="1.70 A"/>
    <property type="chains" value="A/B/C/D/E/F=33-368"/>
</dbReference>
<dbReference type="PDBsum" id="1NHC"/>
<dbReference type="SMR" id="P26213"/>
<dbReference type="Allergome" id="8269">
    <property type="allergen name" value="Asp n Pectinase"/>
</dbReference>
<dbReference type="CAZy" id="GH28">
    <property type="family name" value="Glycoside Hydrolase Family 28"/>
</dbReference>
<dbReference type="GlyCosmos" id="P26213">
    <property type="glycosylation" value="3 sites, No reported glycans"/>
</dbReference>
<dbReference type="iPTMnet" id="P26213"/>
<dbReference type="PaxDb" id="5061-CADANGAP00001113"/>
<dbReference type="EnsemblFungi" id="CAK44054">
    <property type="protein sequence ID" value="CAK44054"/>
    <property type="gene ID" value="An01g11520"/>
</dbReference>
<dbReference type="GeneID" id="4978020"/>
<dbReference type="KEGG" id="ang:An01g11520"/>
<dbReference type="VEuPathDB" id="FungiDB:An01g11520"/>
<dbReference type="VEuPathDB" id="FungiDB:ASPNIDRAFT2_1149968"/>
<dbReference type="VEuPathDB" id="FungiDB:ATCC64974_14230"/>
<dbReference type="VEuPathDB" id="FungiDB:M747DRAFT_286011"/>
<dbReference type="eggNOG" id="ENOG502QST2">
    <property type="taxonomic scope" value="Eukaryota"/>
</dbReference>
<dbReference type="OrthoDB" id="1546079at2759"/>
<dbReference type="BRENDA" id="3.2.1.15">
    <property type="organism ID" value="518"/>
</dbReference>
<dbReference type="EvolutionaryTrace" id="P26213"/>
<dbReference type="GO" id="GO:0005576">
    <property type="term" value="C:extracellular region"/>
    <property type="evidence" value="ECO:0007669"/>
    <property type="project" value="UniProtKB-SubCell"/>
</dbReference>
<dbReference type="GO" id="GO:0004650">
    <property type="term" value="F:polygalacturonase activity"/>
    <property type="evidence" value="ECO:0007669"/>
    <property type="project" value="UniProtKB-EC"/>
</dbReference>
<dbReference type="GO" id="GO:0071555">
    <property type="term" value="P:cell wall organization"/>
    <property type="evidence" value="ECO:0007669"/>
    <property type="project" value="UniProtKB-KW"/>
</dbReference>
<dbReference type="GO" id="GO:0045490">
    <property type="term" value="P:pectin catabolic process"/>
    <property type="evidence" value="ECO:0007669"/>
    <property type="project" value="UniProtKB-ARBA"/>
</dbReference>
<dbReference type="FunFam" id="2.160.20.10:FF:000002">
    <property type="entry name" value="Endopolygalacturonase D"/>
    <property type="match status" value="1"/>
</dbReference>
<dbReference type="Gene3D" id="2.160.20.10">
    <property type="entry name" value="Single-stranded right-handed beta-helix, Pectin lyase-like"/>
    <property type="match status" value="1"/>
</dbReference>
<dbReference type="InterPro" id="IPR000743">
    <property type="entry name" value="Glyco_hydro_28"/>
</dbReference>
<dbReference type="InterPro" id="IPR050434">
    <property type="entry name" value="Glycosyl_hydrlase_28"/>
</dbReference>
<dbReference type="InterPro" id="IPR006626">
    <property type="entry name" value="PbH1"/>
</dbReference>
<dbReference type="InterPro" id="IPR012334">
    <property type="entry name" value="Pectin_lyas_fold"/>
</dbReference>
<dbReference type="InterPro" id="IPR011050">
    <property type="entry name" value="Pectin_lyase_fold/virulence"/>
</dbReference>
<dbReference type="PANTHER" id="PTHR31884:SF13">
    <property type="entry name" value="ENDOPOLYGALACTURONASE B"/>
    <property type="match status" value="1"/>
</dbReference>
<dbReference type="PANTHER" id="PTHR31884">
    <property type="entry name" value="POLYGALACTURONASE"/>
    <property type="match status" value="1"/>
</dbReference>
<dbReference type="Pfam" id="PF00295">
    <property type="entry name" value="Glyco_hydro_28"/>
    <property type="match status" value="1"/>
</dbReference>
<dbReference type="SMART" id="SM00710">
    <property type="entry name" value="PbH1"/>
    <property type="match status" value="6"/>
</dbReference>
<dbReference type="SUPFAM" id="SSF51126">
    <property type="entry name" value="Pectin lyase-like"/>
    <property type="match status" value="1"/>
</dbReference>
<dbReference type="PROSITE" id="PS00502">
    <property type="entry name" value="POLYGALACTURONASE"/>
    <property type="match status" value="1"/>
</dbReference>
<proteinExistence type="evidence at protein level"/>
<organism>
    <name type="scientific">Aspergillus niger</name>
    <dbReference type="NCBI Taxonomy" id="5061"/>
    <lineage>
        <taxon>Eukaryota</taxon>
        <taxon>Fungi</taxon>
        <taxon>Dikarya</taxon>
        <taxon>Ascomycota</taxon>
        <taxon>Pezizomycotina</taxon>
        <taxon>Eurotiomycetes</taxon>
        <taxon>Eurotiomycetidae</taxon>
        <taxon>Eurotiales</taxon>
        <taxon>Aspergillaceae</taxon>
        <taxon>Aspergillus</taxon>
        <taxon>Aspergillus subgen. Circumdati</taxon>
    </lineage>
</organism>
<name>PGLR1_ASPNG</name>
<gene>
    <name type="primary">pgaI</name>
    <name type="synonym">pg1</name>
    <name type="synonym">pga1</name>
</gene>
<keyword id="KW-0002">3D-structure</keyword>
<keyword id="KW-0961">Cell wall biogenesis/degradation</keyword>
<keyword id="KW-0165">Cleavage on pair of basic residues</keyword>
<keyword id="KW-0903">Direct protein sequencing</keyword>
<keyword id="KW-1015">Disulfide bond</keyword>
<keyword id="KW-0325">Glycoprotein</keyword>
<keyword id="KW-0326">Glycosidase</keyword>
<keyword id="KW-0378">Hydrolase</keyword>
<keyword id="KW-0677">Repeat</keyword>
<keyword id="KW-0964">Secreted</keyword>
<keyword id="KW-0732">Signal</keyword>
<keyword id="KW-0865">Zymogen</keyword>
<accession>P26213</accession>
<evidence type="ECO:0000255" key="1"/>
<evidence type="ECO:0000255" key="2">
    <source>
        <dbReference type="PROSITE-ProRule" id="PRU10052"/>
    </source>
</evidence>
<evidence type="ECO:0000269" key="3">
    <source>
    </source>
</evidence>
<evidence type="ECO:0000305" key="4"/>
<evidence type="ECO:0000305" key="5">
    <source>
    </source>
</evidence>
<evidence type="ECO:0007829" key="6">
    <source>
        <dbReference type="PDB" id="1NHC"/>
    </source>
</evidence>
<comment type="function">
    <text>Involved in maceration and soft-rotting of plant tissue. Hydrolyzes the 1,4-alpha glycosidic bonds of de-esterified pectate in the smooth region of the plant cell wall.</text>
</comment>
<comment type="catalytic activity">
    <reaction>
        <text>(1,4-alpha-D-galacturonosyl)n+m + H2O = (1,4-alpha-D-galacturonosyl)n + (1,4-alpha-D-galacturonosyl)m.</text>
        <dbReference type="EC" id="3.2.1.15"/>
    </reaction>
</comment>
<comment type="subcellular location">
    <subcellularLocation>
        <location evidence="4">Secreted</location>
    </subcellularLocation>
</comment>
<comment type="similarity">
    <text evidence="4">Belongs to the glycosyl hydrolase 28 family.</text>
</comment>
<reference key="1">
    <citation type="journal article" date="1991" name="Curr. Genet.">
        <title>Identification and characterization of a second polygalacturonase gene of Aspergillus niger.</title>
        <authorList>
            <person name="Bussink H.J.D."/>
            <person name="Brouwer K."/>
            <person name="de Graaff L.H."/>
            <person name="Kester H.C.M."/>
            <person name="Visser J."/>
        </authorList>
    </citation>
    <scope>NUCLEOTIDE SEQUENCE [GENOMIC DNA]</scope>
    <scope>PROTEIN SEQUENCE OF 32-43; 107-117 AND 205-221</scope>
    <source>
        <strain>ATCC 9029 / NRRL 3 / CBS 120.49 / DSM 2466 / N400 / FGSC 732</strain>
    </source>
</reference>
<reference key="2">
    <citation type="journal article" date="2003" name="FEBS Lett.">
        <title>Structural insights into the processivity of endopolygalacturonase I from Aspergillus niger.</title>
        <authorList>
            <person name="van Pouderoyen G."/>
            <person name="Snijder H.J."/>
            <person name="Benen J.A.E."/>
            <person name="Dijkstra B.W."/>
        </authorList>
    </citation>
    <scope>X-RAY CRYSTALLOGRAPHY (1.7 ANGSTROMS) OF 33-368</scope>
    <scope>GLYCOSYLATION AT SER-44; SER-46 AND ASN-246</scope>
</reference>
<protein>
    <recommendedName>
        <fullName>Endopolygalacturonase I</fullName>
        <ecNumber>3.2.1.15</ecNumber>
    </recommendedName>
    <alternativeName>
        <fullName>Pectinase 1</fullName>
    </alternativeName>
    <alternativeName>
        <fullName>Polygalacturonase I</fullName>
        <shortName>PG-I</shortName>
    </alternativeName>
</protein>
<sequence length="368" mass="38108">MHSYQLLGLAAVGSLVSAAPAPSRVSEFAKKASTCTFTSASEASESISSCSDVVLSSIEVPAGETLDLSDAADGSTITFEGTTSFGYKEWKGPLIRFGGKDLTVTMADGAVIDGDGSRWWDSKGTNGGKTKPKFMYIHDVEDSTFKGINIKNTPVQAISVQATNVHLNDFTIDNSDGDDNGGHNTDGFDISESTGVYISGATVKNQDDCIAINSGESISFTGGTCSGGHGLSIGSVGGRDDNTVKNVTISDSTVSNSANGVRIKTIYKETGDVSEITYSNIQLSGITDYGIVIEQDYENGSPTGTPSTGIPITDVTVDGVTGTLEDDATQVYILCGDGSCSDWTWSGVDLSGGKTSDKCENVPSGASC</sequence>
<feature type="signal peptide" evidence="1">
    <location>
        <begin position="1"/>
        <end position="18"/>
    </location>
</feature>
<feature type="propeptide" id="PRO_0000024768" evidence="1">
    <location>
        <begin position="19"/>
        <end position="31"/>
    </location>
</feature>
<feature type="chain" id="PRO_0000024769" description="Endopolygalacturonase I">
    <location>
        <begin position="32"/>
        <end position="368"/>
    </location>
</feature>
<feature type="repeat" description="PbH1 1">
    <location>
        <begin position="140"/>
        <end position="161"/>
    </location>
</feature>
<feature type="repeat" description="PbH1 2">
    <location>
        <begin position="162"/>
        <end position="192"/>
    </location>
</feature>
<feature type="repeat" description="PbH1 3">
    <location>
        <begin position="193"/>
        <end position="214"/>
    </location>
</feature>
<feature type="repeat" description="PbH1 4">
    <location>
        <begin position="244"/>
        <end position="265"/>
    </location>
</feature>
<feature type="repeat" description="PbH1 5">
    <location>
        <begin position="273"/>
        <end position="295"/>
    </location>
</feature>
<feature type="repeat" description="PbH1 6">
    <location>
        <begin position="307"/>
        <end position="352"/>
    </location>
</feature>
<feature type="active site" description="Proton donor" evidence="2">
    <location>
        <position position="207"/>
    </location>
</feature>
<feature type="active site" evidence="4">
    <location>
        <position position="229"/>
    </location>
</feature>
<feature type="glycosylation site" description="O-linked (Man) serine" evidence="3">
    <location>
        <position position="44"/>
    </location>
</feature>
<feature type="glycosylation site" description="O-linked (Man) serine" evidence="3">
    <location>
        <position position="46"/>
    </location>
</feature>
<feature type="glycosylation site" description="N-linked (GlcNAc...) asparagine" evidence="5">
    <location>
        <position position="246"/>
    </location>
</feature>
<feature type="disulfide bond">
    <location>
        <begin position="35"/>
        <end position="50"/>
    </location>
</feature>
<feature type="disulfide bond">
    <location>
        <begin position="209"/>
        <end position="225"/>
    </location>
</feature>
<feature type="disulfide bond">
    <location>
        <begin position="335"/>
        <end position="340"/>
    </location>
</feature>
<feature type="disulfide bond">
    <location>
        <begin position="359"/>
        <end position="368"/>
    </location>
</feature>
<feature type="strand" evidence="6">
    <location>
        <begin position="35"/>
        <end position="39"/>
    </location>
</feature>
<feature type="helix" evidence="6">
    <location>
        <begin position="40"/>
        <end position="46"/>
    </location>
</feature>
<feature type="helix" evidence="6">
    <location>
        <begin position="47"/>
        <end position="49"/>
    </location>
</feature>
<feature type="strand" evidence="6">
    <location>
        <begin position="51"/>
        <end position="57"/>
    </location>
</feature>
<feature type="strand" evidence="6">
    <location>
        <begin position="76"/>
        <end position="85"/>
    </location>
</feature>
<feature type="strand" evidence="6">
    <location>
        <begin position="94"/>
        <end position="96"/>
    </location>
</feature>
<feature type="strand" evidence="6">
    <location>
        <begin position="99"/>
        <end position="101"/>
    </location>
</feature>
<feature type="strand" evidence="6">
    <location>
        <begin position="103"/>
        <end position="106"/>
    </location>
</feature>
<feature type="strand" evidence="6">
    <location>
        <begin position="111"/>
        <end position="113"/>
    </location>
</feature>
<feature type="helix" evidence="6">
    <location>
        <begin position="116"/>
        <end position="118"/>
    </location>
</feature>
<feature type="turn" evidence="6">
    <location>
        <begin position="124"/>
        <end position="126"/>
    </location>
</feature>
<feature type="strand" evidence="6">
    <location>
        <begin position="127"/>
        <end position="129"/>
    </location>
</feature>
<feature type="strand" evidence="6">
    <location>
        <begin position="135"/>
        <end position="147"/>
    </location>
</feature>
<feature type="strand" evidence="6">
    <location>
        <begin position="149"/>
        <end position="151"/>
    </location>
</feature>
<feature type="strand" evidence="6">
    <location>
        <begin position="158"/>
        <end position="169"/>
    </location>
</feature>
<feature type="strand" evidence="6">
    <location>
        <begin position="171"/>
        <end position="173"/>
    </location>
</feature>
<feature type="helix" evidence="6">
    <location>
        <begin position="177"/>
        <end position="180"/>
    </location>
</feature>
<feature type="strand" evidence="6">
    <location>
        <begin position="187"/>
        <end position="190"/>
    </location>
</feature>
<feature type="strand" evidence="6">
    <location>
        <begin position="194"/>
        <end position="200"/>
    </location>
</feature>
<feature type="strand" evidence="6">
    <location>
        <begin position="202"/>
        <end position="222"/>
    </location>
</feature>
<feature type="strand" evidence="6">
    <location>
        <begin position="224"/>
        <end position="240"/>
    </location>
</feature>
<feature type="strand" evidence="6">
    <location>
        <begin position="243"/>
        <end position="256"/>
    </location>
</feature>
<feature type="strand" evidence="6">
    <location>
        <begin position="258"/>
        <end position="266"/>
    </location>
</feature>
<feature type="strand" evidence="6">
    <location>
        <begin position="272"/>
        <end position="298"/>
    </location>
</feature>
<feature type="strand" evidence="6">
    <location>
        <begin position="308"/>
        <end position="310"/>
    </location>
</feature>
<feature type="strand" evidence="6">
    <location>
        <begin position="312"/>
        <end position="324"/>
    </location>
</feature>
<feature type="strand" evidence="6">
    <location>
        <begin position="329"/>
        <end position="334"/>
    </location>
</feature>
<feature type="strand" evidence="6">
    <location>
        <begin position="340"/>
        <end position="354"/>
    </location>
</feature>